<sequence length="196" mass="23636">MFRLDLLSDPLEQFKLWYDEAIRHETLHPDAMVLATADSKGKPSARNVLYKGISKGGFLIFTNYHSRKAHELDENPQAAWVFYWPKTYKQVRGEGRVERLTQEESEAYFETRSYESQIAAWVSEQSQEIPDREYLITRYKKYREKFQDDVRCPEFWGGFRLIPDRMEFWVGQEHRLHDRFCYLKENQEWKIIRLAP</sequence>
<reference key="1">
    <citation type="journal article" date="2003" name="Proc. Natl. Acad. Sci. U.S.A.">
        <title>Complete genome sequence of the Q-fever pathogen, Coxiella burnetii.</title>
        <authorList>
            <person name="Seshadri R."/>
            <person name="Paulsen I.T."/>
            <person name="Eisen J.A."/>
            <person name="Read T.D."/>
            <person name="Nelson K.E."/>
            <person name="Nelson W.C."/>
            <person name="Ward N.L."/>
            <person name="Tettelin H."/>
            <person name="Davidsen T.M."/>
            <person name="Beanan M.J."/>
            <person name="DeBoy R.T."/>
            <person name="Daugherty S.C."/>
            <person name="Brinkac L.M."/>
            <person name="Madupu R."/>
            <person name="Dodson R.J."/>
            <person name="Khouri H.M."/>
            <person name="Lee K.H."/>
            <person name="Carty H.A."/>
            <person name="Scanlan D."/>
            <person name="Heinzen R.A."/>
            <person name="Thompson H.A."/>
            <person name="Samuel J.E."/>
            <person name="Fraser C.M."/>
            <person name="Heidelberg J.F."/>
        </authorList>
    </citation>
    <scope>NUCLEOTIDE SEQUENCE [LARGE SCALE GENOMIC DNA]</scope>
    <source>
        <strain>RSA 493 / Nine Mile phase I</strain>
    </source>
</reference>
<comment type="function">
    <text evidence="1">Catalyzes the oxidation of either pyridoxine 5'-phosphate (PNP) or pyridoxamine 5'-phosphate (PMP) into pyridoxal 5'-phosphate (PLP).</text>
</comment>
<comment type="catalytic activity">
    <reaction evidence="1">
        <text>pyridoxamine 5'-phosphate + O2 + H2O = pyridoxal 5'-phosphate + H2O2 + NH4(+)</text>
        <dbReference type="Rhea" id="RHEA:15817"/>
        <dbReference type="ChEBI" id="CHEBI:15377"/>
        <dbReference type="ChEBI" id="CHEBI:15379"/>
        <dbReference type="ChEBI" id="CHEBI:16240"/>
        <dbReference type="ChEBI" id="CHEBI:28938"/>
        <dbReference type="ChEBI" id="CHEBI:58451"/>
        <dbReference type="ChEBI" id="CHEBI:597326"/>
        <dbReference type="EC" id="1.4.3.5"/>
    </reaction>
</comment>
<comment type="catalytic activity">
    <reaction evidence="1">
        <text>pyridoxine 5'-phosphate + O2 = pyridoxal 5'-phosphate + H2O2</text>
        <dbReference type="Rhea" id="RHEA:15149"/>
        <dbReference type="ChEBI" id="CHEBI:15379"/>
        <dbReference type="ChEBI" id="CHEBI:16240"/>
        <dbReference type="ChEBI" id="CHEBI:58589"/>
        <dbReference type="ChEBI" id="CHEBI:597326"/>
        <dbReference type="EC" id="1.4.3.5"/>
    </reaction>
</comment>
<comment type="cofactor">
    <cofactor evidence="1">
        <name>FMN</name>
        <dbReference type="ChEBI" id="CHEBI:58210"/>
    </cofactor>
    <text evidence="1">Binds 1 FMN per subunit.</text>
</comment>
<comment type="pathway">
    <text evidence="1">Cofactor metabolism; pyridoxal 5'-phosphate salvage; pyridoxal 5'-phosphate from pyridoxamine 5'-phosphate: step 1/1.</text>
</comment>
<comment type="pathway">
    <text evidence="1">Cofactor metabolism; pyridoxal 5'-phosphate salvage; pyridoxal 5'-phosphate from pyridoxine 5'-phosphate: step 1/1.</text>
</comment>
<comment type="subunit">
    <text evidence="1">Homodimer.</text>
</comment>
<comment type="similarity">
    <text evidence="1">Belongs to the pyridoxamine 5'-phosphate oxidase family.</text>
</comment>
<evidence type="ECO:0000255" key="1">
    <source>
        <dbReference type="HAMAP-Rule" id="MF_01629"/>
    </source>
</evidence>
<name>PDXH_COXBU</name>
<accession>Q83D18</accession>
<keyword id="KW-0285">Flavoprotein</keyword>
<keyword id="KW-0288">FMN</keyword>
<keyword id="KW-0560">Oxidoreductase</keyword>
<keyword id="KW-0664">Pyridoxine biosynthesis</keyword>
<keyword id="KW-1185">Reference proteome</keyword>
<organism>
    <name type="scientific">Coxiella burnetii (strain RSA 493 / Nine Mile phase I)</name>
    <dbReference type="NCBI Taxonomy" id="227377"/>
    <lineage>
        <taxon>Bacteria</taxon>
        <taxon>Pseudomonadati</taxon>
        <taxon>Pseudomonadota</taxon>
        <taxon>Gammaproteobacteria</taxon>
        <taxon>Legionellales</taxon>
        <taxon>Coxiellaceae</taxon>
        <taxon>Coxiella</taxon>
    </lineage>
</organism>
<proteinExistence type="inferred from homology"/>
<protein>
    <recommendedName>
        <fullName evidence="1">Pyridoxine/pyridoxamine 5'-phosphate oxidase</fullName>
        <ecNumber evidence="1">1.4.3.5</ecNumber>
    </recommendedName>
    <alternativeName>
        <fullName evidence="1">PNP/PMP oxidase</fullName>
        <shortName evidence="1">PNPOx</shortName>
    </alternativeName>
    <alternativeName>
        <fullName evidence="1">Pyridoxal 5'-phosphate synthase</fullName>
    </alternativeName>
</protein>
<feature type="chain" id="PRO_0000167700" description="Pyridoxine/pyridoxamine 5'-phosphate oxidase">
    <location>
        <begin position="1"/>
        <end position="196"/>
    </location>
</feature>
<feature type="binding site" evidence="1">
    <location>
        <begin position="46"/>
        <end position="51"/>
    </location>
    <ligand>
        <name>FMN</name>
        <dbReference type="ChEBI" id="CHEBI:58210"/>
    </ligand>
</feature>
<feature type="binding site" evidence="1">
    <location>
        <position position="51"/>
    </location>
    <ligand>
        <name>substrate</name>
    </ligand>
</feature>
<feature type="binding site" evidence="1">
    <location>
        <begin position="61"/>
        <end position="62"/>
    </location>
    <ligand>
        <name>FMN</name>
        <dbReference type="ChEBI" id="CHEBI:58210"/>
    </ligand>
</feature>
<feature type="binding site" evidence="1">
    <location>
        <position position="67"/>
    </location>
    <ligand>
        <name>FMN</name>
        <dbReference type="ChEBI" id="CHEBI:58210"/>
    </ligand>
</feature>
<feature type="binding site" evidence="1">
    <location>
        <position position="68"/>
    </location>
    <ligand>
        <name>FMN</name>
        <dbReference type="ChEBI" id="CHEBI:58210"/>
    </ligand>
</feature>
<feature type="binding site" evidence="1">
    <location>
        <position position="90"/>
    </location>
    <ligand>
        <name>FMN</name>
        <dbReference type="ChEBI" id="CHEBI:58210"/>
    </ligand>
</feature>
<feature type="binding site" evidence="1">
    <location>
        <position position="108"/>
    </location>
    <ligand>
        <name>substrate</name>
    </ligand>
</feature>
<feature type="binding site" evidence="1">
    <location>
        <position position="112"/>
    </location>
    <ligand>
        <name>substrate</name>
    </ligand>
</feature>
<feature type="binding site" evidence="1">
    <location>
        <position position="116"/>
    </location>
    <ligand>
        <name>substrate</name>
    </ligand>
</feature>
<feature type="binding site" evidence="1">
    <location>
        <begin position="125"/>
        <end position="126"/>
    </location>
    <ligand>
        <name>FMN</name>
        <dbReference type="ChEBI" id="CHEBI:58210"/>
    </ligand>
</feature>
<feature type="binding site" evidence="1">
    <location>
        <position position="169"/>
    </location>
    <ligand>
        <name>FMN</name>
        <dbReference type="ChEBI" id="CHEBI:58210"/>
    </ligand>
</feature>
<feature type="binding site" evidence="1">
    <location>
        <begin position="175"/>
        <end position="177"/>
    </location>
    <ligand>
        <name>substrate</name>
    </ligand>
</feature>
<feature type="binding site" evidence="1">
    <location>
        <position position="179"/>
    </location>
    <ligand>
        <name>FMN</name>
        <dbReference type="ChEBI" id="CHEBI:58210"/>
    </ligand>
</feature>
<gene>
    <name evidence="1" type="primary">pdxH</name>
    <name type="ordered locus">CBU_0928</name>
</gene>
<dbReference type="EC" id="1.4.3.5" evidence="1"/>
<dbReference type="EMBL" id="AE016828">
    <property type="protein sequence ID" value="AAO90455.1"/>
    <property type="molecule type" value="Genomic_DNA"/>
</dbReference>
<dbReference type="RefSeq" id="NP_819941.1">
    <property type="nucleotide sequence ID" value="NC_002971.4"/>
</dbReference>
<dbReference type="RefSeq" id="WP_005768240.1">
    <property type="nucleotide sequence ID" value="NZ_CDBG01000001.1"/>
</dbReference>
<dbReference type="SMR" id="Q83D18"/>
<dbReference type="STRING" id="227377.CBU_0928"/>
<dbReference type="DNASU" id="1208821"/>
<dbReference type="EnsemblBacteria" id="AAO90455">
    <property type="protein sequence ID" value="AAO90455"/>
    <property type="gene ID" value="CBU_0928"/>
</dbReference>
<dbReference type="GeneID" id="1208821"/>
<dbReference type="KEGG" id="cbu:CBU_0928"/>
<dbReference type="PATRIC" id="fig|227377.7.peg.918"/>
<dbReference type="eggNOG" id="COG0259">
    <property type="taxonomic scope" value="Bacteria"/>
</dbReference>
<dbReference type="HOGENOM" id="CLU_032263_2_2_6"/>
<dbReference type="OrthoDB" id="9780392at2"/>
<dbReference type="UniPathway" id="UPA01068">
    <property type="reaction ID" value="UER00304"/>
</dbReference>
<dbReference type="UniPathway" id="UPA01068">
    <property type="reaction ID" value="UER00305"/>
</dbReference>
<dbReference type="Proteomes" id="UP000002671">
    <property type="component" value="Chromosome"/>
</dbReference>
<dbReference type="GO" id="GO:0010181">
    <property type="term" value="F:FMN binding"/>
    <property type="evidence" value="ECO:0007669"/>
    <property type="project" value="UniProtKB-UniRule"/>
</dbReference>
<dbReference type="GO" id="GO:0004733">
    <property type="term" value="F:pyridoxamine phosphate oxidase activity"/>
    <property type="evidence" value="ECO:0000318"/>
    <property type="project" value="GO_Central"/>
</dbReference>
<dbReference type="GO" id="GO:0042823">
    <property type="term" value="P:pyridoxal phosphate biosynthetic process"/>
    <property type="evidence" value="ECO:0000318"/>
    <property type="project" value="GO_Central"/>
</dbReference>
<dbReference type="GO" id="GO:0008615">
    <property type="term" value="P:pyridoxine biosynthetic process"/>
    <property type="evidence" value="ECO:0007669"/>
    <property type="project" value="UniProtKB-KW"/>
</dbReference>
<dbReference type="FunFam" id="2.30.110.10:FF:000020">
    <property type="entry name" value="PNPO isoform 11"/>
    <property type="match status" value="1"/>
</dbReference>
<dbReference type="Gene3D" id="2.30.110.10">
    <property type="entry name" value="Electron Transport, Fmn-binding Protein, Chain A"/>
    <property type="match status" value="1"/>
</dbReference>
<dbReference type="HAMAP" id="MF_01629">
    <property type="entry name" value="PdxH"/>
    <property type="match status" value="1"/>
</dbReference>
<dbReference type="InterPro" id="IPR000659">
    <property type="entry name" value="Pyridox_Oxase"/>
</dbReference>
<dbReference type="InterPro" id="IPR019740">
    <property type="entry name" value="Pyridox_Oxase_CS"/>
</dbReference>
<dbReference type="InterPro" id="IPR011576">
    <property type="entry name" value="Pyridox_Oxase_N"/>
</dbReference>
<dbReference type="InterPro" id="IPR019576">
    <property type="entry name" value="Pyridoxamine_oxidase_dimer_C"/>
</dbReference>
<dbReference type="InterPro" id="IPR012349">
    <property type="entry name" value="Split_barrel_FMN-bd"/>
</dbReference>
<dbReference type="NCBIfam" id="TIGR00558">
    <property type="entry name" value="pdxH"/>
    <property type="match status" value="1"/>
</dbReference>
<dbReference type="NCBIfam" id="NF004231">
    <property type="entry name" value="PRK05679.1"/>
    <property type="match status" value="1"/>
</dbReference>
<dbReference type="PANTHER" id="PTHR10851:SF0">
    <property type="entry name" value="PYRIDOXINE-5'-PHOSPHATE OXIDASE"/>
    <property type="match status" value="1"/>
</dbReference>
<dbReference type="PANTHER" id="PTHR10851">
    <property type="entry name" value="PYRIDOXINE-5-PHOSPHATE OXIDASE"/>
    <property type="match status" value="1"/>
</dbReference>
<dbReference type="Pfam" id="PF10590">
    <property type="entry name" value="PNP_phzG_C"/>
    <property type="match status" value="1"/>
</dbReference>
<dbReference type="Pfam" id="PF01243">
    <property type="entry name" value="PNPOx_N"/>
    <property type="match status" value="1"/>
</dbReference>
<dbReference type="PIRSF" id="PIRSF000190">
    <property type="entry name" value="Pyd_amn-ph_oxd"/>
    <property type="match status" value="1"/>
</dbReference>
<dbReference type="SUPFAM" id="SSF50475">
    <property type="entry name" value="FMN-binding split barrel"/>
    <property type="match status" value="1"/>
</dbReference>
<dbReference type="PROSITE" id="PS01064">
    <property type="entry name" value="PYRIDOX_OXIDASE"/>
    <property type="match status" value="1"/>
</dbReference>